<feature type="signal peptide" evidence="2">
    <location>
        <begin position="1"/>
        <end position="15"/>
    </location>
</feature>
<feature type="chain" id="PRO_5012339014" description="Class II hydrophobin B">
    <location>
        <begin position="16"/>
        <end position="99"/>
    </location>
</feature>
<feature type="disulfide bond" evidence="1">
    <location>
        <begin position="30"/>
        <end position="79"/>
    </location>
</feature>
<feature type="disulfide bond" evidence="1">
    <location>
        <begin position="40"/>
        <end position="70"/>
    </location>
</feature>
<protein>
    <recommendedName>
        <fullName evidence="5">Class II hydrophobin B</fullName>
    </recommendedName>
</protein>
<accession>J5JTB1</accession>
<keyword id="KW-0134">Cell wall</keyword>
<keyword id="KW-0968">Cytoplasmic vesicle</keyword>
<keyword id="KW-1015">Disulfide bond</keyword>
<keyword id="KW-1185">Reference proteome</keyword>
<keyword id="KW-0964">Secreted</keyword>
<keyword id="KW-0732">Signal</keyword>
<keyword id="KW-0926">Vacuole</keyword>
<name>HYD2B_BEAB2</name>
<reference key="1">
    <citation type="journal article" date="2012" name="Sci. Rep.">
        <title>Genomic perspectives on the evolution of fungal entomopathogenicity in Beauveria bassiana.</title>
        <authorList>
            <person name="Xiao G."/>
            <person name="Ying S.-H."/>
            <person name="Zheng P."/>
            <person name="Wang Z.-L."/>
            <person name="Zhang S."/>
            <person name="Xie X.-Q."/>
            <person name="Shang Y."/>
            <person name="St Leger R.J."/>
            <person name="Zhao G.-P."/>
            <person name="Wang C."/>
            <person name="Feng M.-G."/>
        </authorList>
    </citation>
    <scope>NUCLEOTIDE SEQUENCE [LARGE SCALE GENOMIC DNA]</scope>
    <source>
        <strain>ARSEF 2860</strain>
    </source>
</reference>
<reference key="2">
    <citation type="journal article" date="2023" name="J. Invertebr. Pathol.">
        <title>Only one of three hydrophobins (Hyd1-3) contributes to conidial hydrophobicity and insect pathogenicity of Metarhizium robertsii.</title>
        <authorList>
            <person name="Zhang J.G."/>
            <person name="Xu S.Y."/>
            <person name="Ying S.H."/>
            <person name="Feng M.G."/>
        </authorList>
    </citation>
    <scope>IDENTIFICATION</scope>
</reference>
<reference key="3">
    <citation type="journal article" date="2025" name="Microbiol. Res.">
        <title>Deciphering roles of nine hydrophobins (Hyd1A-F and Hyd2A-C) in the asexual and insect-pathogenic lifecycles of Beauveria bassiana.</title>
        <authorList>
            <person name="Feng J.R."/>
            <person name="Li M."/>
            <person name="Ying S.H."/>
            <person name="Feng M.G."/>
        </authorList>
    </citation>
    <scope>FUNCTION</scope>
    <scope>SUBCELLULAR LOCATION</scope>
    <scope>DISRUPTION PHENOTYPE</scope>
</reference>
<gene>
    <name evidence="5" type="primary">hyd2B</name>
    <name evidence="4" type="synonym">hyd4</name>
    <name type="ORF">BBA_02999</name>
</gene>
<dbReference type="EMBL" id="JH725155">
    <property type="protein sequence ID" value="EJP68103.1"/>
    <property type="molecule type" value="Genomic_DNA"/>
</dbReference>
<dbReference type="RefSeq" id="XP_008596318.1">
    <property type="nucleotide sequence ID" value="XM_008598096.1"/>
</dbReference>
<dbReference type="SMR" id="J5JTB1"/>
<dbReference type="STRING" id="655819.J5JTB1"/>
<dbReference type="GeneID" id="19886011"/>
<dbReference type="HOGENOM" id="CLU_141181_2_2_1"/>
<dbReference type="InParanoid" id="J5JTB1"/>
<dbReference type="OrthoDB" id="8956at474943"/>
<dbReference type="Proteomes" id="UP000002762">
    <property type="component" value="Unassembled WGS sequence"/>
</dbReference>
<dbReference type="GO" id="GO:0005576">
    <property type="term" value="C:extracellular region"/>
    <property type="evidence" value="ECO:0007669"/>
    <property type="project" value="UniProtKB-KW"/>
</dbReference>
<dbReference type="CDD" id="cd23508">
    <property type="entry name" value="hydrophobin_II"/>
    <property type="match status" value="1"/>
</dbReference>
<dbReference type="Gene3D" id="3.20.120.10">
    <property type="entry name" value="Hydrophobin"/>
    <property type="match status" value="1"/>
</dbReference>
<dbReference type="InterPro" id="IPR010636">
    <property type="entry name" value="Cerato-ulmin_hydrophobin"/>
</dbReference>
<dbReference type="InterPro" id="IPR036686">
    <property type="entry name" value="Hydrophobin_sf"/>
</dbReference>
<dbReference type="PANTHER" id="PTHR42341">
    <property type="entry name" value="HYDROPHOBIN"/>
    <property type="match status" value="1"/>
</dbReference>
<dbReference type="PANTHER" id="PTHR42341:SF1">
    <property type="entry name" value="HYDROPHOBIN"/>
    <property type="match status" value="1"/>
</dbReference>
<dbReference type="Pfam" id="PF06766">
    <property type="entry name" value="Hydrophobin_2"/>
    <property type="match status" value="1"/>
</dbReference>
<dbReference type="SUPFAM" id="SSF101751">
    <property type="entry name" value="Hydrophobin II, HfbII"/>
    <property type="match status" value="1"/>
</dbReference>
<organism>
    <name type="scientific">Beauveria bassiana (strain ARSEF 2860)</name>
    <name type="common">White muscardine disease fungus</name>
    <name type="synonym">Tritirachium shiotae</name>
    <dbReference type="NCBI Taxonomy" id="655819"/>
    <lineage>
        <taxon>Eukaryota</taxon>
        <taxon>Fungi</taxon>
        <taxon>Dikarya</taxon>
        <taxon>Ascomycota</taxon>
        <taxon>Pezizomycotina</taxon>
        <taxon>Sordariomycetes</taxon>
        <taxon>Hypocreomycetidae</taxon>
        <taxon>Hypocreales</taxon>
        <taxon>Cordycipitaceae</taxon>
        <taxon>Beauveria</taxon>
    </lineage>
</organism>
<proteinExistence type="evidence at transcript level"/>
<evidence type="ECO:0000250" key="1">
    <source>
        <dbReference type="UniProtKB" id="Q04571"/>
    </source>
</evidence>
<evidence type="ECO:0000255" key="2"/>
<evidence type="ECO:0000269" key="3">
    <source>
    </source>
</evidence>
<evidence type="ECO:0000303" key="4">
    <source>
    </source>
</evidence>
<evidence type="ECO:0000303" key="5">
    <source>
    </source>
</evidence>
<evidence type="ECO:0000305" key="6"/>
<evidence type="ECO:0000305" key="7">
    <source>
    </source>
</evidence>
<comment type="function">
    <text evidence="3 7">Aerial growth, conidiation, and dispersal of filamentous fungi in the environment rely upon a capability of their secreting small amphipathic proteins called hydrophobins (HPBs) with low sequence identity. Class I can self-assemble into an outermost layer of rodlet bundles on aerial cell surfaces, conferring cellular hydrophobicity that supports fungal growth, development and dispersal; whereas Class II form highly ordered films at water-air interfaces through intermolecular interactions but contribute nothing to the rodlet structure (Probable). Hyd2B contributes to certain cell wall-related features, such as hydrophobicity but is not involved in cell wall-related events during fungal proliferation in host hemocoel (PubMed:39724799). Does not contribute to conidial hydrophobicity (PubMed:39724799). Involved in insect hemocoel colonization independent of cell hydrophobicity (PubMed:39724799).</text>
</comment>
<comment type="subcellular location">
    <subcellularLocation>
        <location evidence="3">Secreted</location>
    </subcellularLocation>
    <subcellularLocation>
        <location evidence="3">Secreted</location>
        <location evidence="3">Cell wall</location>
    </subcellularLocation>
    <subcellularLocation>
        <location evidence="3">Vacuole</location>
    </subcellularLocation>
    <subcellularLocation>
        <location evidence="3">Cytoplasmic vesicle</location>
    </subcellularLocation>
    <text evidence="3">Accumulates exclusively on the cell walls of aerial hyphae and conidia and in the vacuoles and vesicles of hyphae and blastospores.</text>
</comment>
<comment type="induction">
    <text evidence="3">Under normal conditions on SDAY medium (Sabouraud dextrose agar plus 1% yeast extract), the expression of hyd2B is increasingly down-regulated to a hardly detectable level on day 6. Hyd1A is the most active at transcription level under normal culture conditions, followed by hyd1B, hyd1E, hyd2A and hyd2C in order.</text>
</comment>
<comment type="disruption phenotype">
    <text evidence="3">Does not affect radial growth and multiple stress responses.</text>
</comment>
<comment type="similarity">
    <text evidence="6">Belongs to the cerato-ulmin hydrophobin family.</text>
</comment>
<sequence>MKFFAIAALFAGALAMPTTEIEARTDKAVCPSGLYSNLVCADVDVLGILCLHATSPSETPRDARHFQEICAKVGKQARCAVLPVAEQAVLCQRPAGVSA</sequence>